<comment type="function">
    <text>Promotes colloidosmotic lysis by binding to the midgut epithelial cells of many lepidopteran larvae.</text>
</comment>
<comment type="developmental stage">
    <text>The crystal protein is produced during sporulation and is accumulated both as an inclusion and as part of the spore coat.</text>
</comment>
<comment type="miscellaneous">
    <text>Toxic segment of the protein is located in the N-terminus.</text>
</comment>
<comment type="similarity">
    <text evidence="1">Belongs to the delta endotoxin family.</text>
</comment>
<reference key="1">
    <citation type="journal article" date="1990" name="Nucleic Acids Res.">
        <title>Nucleotide sequence and deduced amino acid sequence of new Lepidoptera-specific crystal protein gene from Bacillus thuringiensis.</title>
        <authorList>
            <person name="Hoefte H."/>
            <person name="Soetaert P."/>
            <person name="Jansens S."/>
            <person name="Peferoen M."/>
        </authorList>
    </citation>
    <scope>NUCLEOTIDE SEQUENCE [GENOMIC DNA]</scope>
    <source>
        <strain>HD-68</strain>
    </source>
</reference>
<proteinExistence type="evidence at protein level"/>
<evidence type="ECO:0000305" key="1"/>
<evidence type="ECO:0007829" key="2">
    <source>
        <dbReference type="PDB" id="6OVB"/>
    </source>
</evidence>
<organism>
    <name type="scientific">Bacillus thuringiensis subsp. aizawai</name>
    <dbReference type="NCBI Taxonomy" id="1433"/>
    <lineage>
        <taxon>Bacteria</taxon>
        <taxon>Bacillati</taxon>
        <taxon>Bacillota</taxon>
        <taxon>Bacilli</taxon>
        <taxon>Bacillales</taxon>
        <taxon>Bacillaceae</taxon>
        <taxon>Bacillus</taxon>
        <taxon>Bacillus cereus group</taxon>
    </lineage>
</organism>
<gene>
    <name type="primary">cry1Da</name>
    <name type="synonym">bt4</name>
    <name type="synonym">cryID</name>
    <name type="synonym">cryID(a)</name>
</gene>
<name>CR1DA_BACTA</name>
<dbReference type="EMBL" id="X54160">
    <property type="protein sequence ID" value="CAA38099.1"/>
    <property type="molecule type" value="Genomic_DNA"/>
</dbReference>
<dbReference type="PIR" id="S11446">
    <property type="entry name" value="S11446"/>
</dbReference>
<dbReference type="RefSeq" id="WP_042991627.1">
    <property type="nucleotide sequence ID" value="NZ_NFEV01000141.1"/>
</dbReference>
<dbReference type="PDB" id="6OVB">
    <property type="method" value="X-ray"/>
    <property type="resolution" value="2.61 A"/>
    <property type="chains" value="A=27-603"/>
</dbReference>
<dbReference type="PDBsum" id="6OVB"/>
<dbReference type="SMR" id="P19415"/>
<dbReference type="GO" id="GO:0005102">
    <property type="term" value="F:signaling receptor binding"/>
    <property type="evidence" value="ECO:0007669"/>
    <property type="project" value="InterPro"/>
</dbReference>
<dbReference type="GO" id="GO:0090729">
    <property type="term" value="F:toxin activity"/>
    <property type="evidence" value="ECO:0007669"/>
    <property type="project" value="UniProtKB-KW"/>
</dbReference>
<dbReference type="GO" id="GO:0030435">
    <property type="term" value="P:sporulation resulting in formation of a cellular spore"/>
    <property type="evidence" value="ECO:0007669"/>
    <property type="project" value="UniProtKB-KW"/>
</dbReference>
<dbReference type="GO" id="GO:0001907">
    <property type="term" value="P:symbiont-mediated killing of host cell"/>
    <property type="evidence" value="ECO:0007669"/>
    <property type="project" value="InterPro"/>
</dbReference>
<dbReference type="CDD" id="cd04085">
    <property type="entry name" value="delta_endotoxin_C"/>
    <property type="match status" value="1"/>
</dbReference>
<dbReference type="Gene3D" id="2.60.120.260">
    <property type="entry name" value="Galactose-binding domain-like"/>
    <property type="match status" value="2"/>
</dbReference>
<dbReference type="Gene3D" id="2.100.10.10">
    <property type="entry name" value="Pesticidal crystal protein, central domain"/>
    <property type="match status" value="1"/>
</dbReference>
<dbReference type="Gene3D" id="1.20.190.10">
    <property type="entry name" value="Pesticidal crystal protein, N-terminal domain"/>
    <property type="match status" value="1"/>
</dbReference>
<dbReference type="InterPro" id="IPR048645">
    <property type="entry name" value="Cry1Ac-like_dom-VII"/>
</dbReference>
<dbReference type="InterPro" id="IPR041587">
    <property type="entry name" value="Cry_V"/>
</dbReference>
<dbReference type="InterPro" id="IPR008979">
    <property type="entry name" value="Galactose-bd-like_sf"/>
</dbReference>
<dbReference type="InterPro" id="IPR038979">
    <property type="entry name" value="Pest_crys"/>
</dbReference>
<dbReference type="InterPro" id="IPR005638">
    <property type="entry name" value="Pest_crys_dom-III"/>
</dbReference>
<dbReference type="InterPro" id="IPR005639">
    <property type="entry name" value="Pest_crys_dom_I"/>
</dbReference>
<dbReference type="InterPro" id="IPR036716">
    <property type="entry name" value="Pest_crys_N_sf"/>
</dbReference>
<dbReference type="InterPro" id="IPR036399">
    <property type="entry name" value="Pest_cryst_cen_dom_sf"/>
</dbReference>
<dbReference type="InterPro" id="IPR001178">
    <property type="entry name" value="Pest_cryst_dom_II"/>
</dbReference>
<dbReference type="PANTHER" id="PTHR37003">
    <property type="entry name" value="ENDOTOXIN_N DOMAIN-CONTAINING PROTEIN-RELATED"/>
    <property type="match status" value="1"/>
</dbReference>
<dbReference type="PANTHER" id="PTHR37003:SF2">
    <property type="entry name" value="PESTICIDAL CRYSTAL PROTEIN N-TERMINAL DOMAIN-CONTAINING PROTEIN"/>
    <property type="match status" value="1"/>
</dbReference>
<dbReference type="Pfam" id="PF17997">
    <property type="entry name" value="Cry1Ac_D5"/>
    <property type="match status" value="1"/>
</dbReference>
<dbReference type="Pfam" id="PF21463">
    <property type="entry name" value="Cry1Ac_dom-VII"/>
    <property type="match status" value="1"/>
</dbReference>
<dbReference type="Pfam" id="PF03944">
    <property type="entry name" value="Endotoxin_C"/>
    <property type="match status" value="1"/>
</dbReference>
<dbReference type="Pfam" id="PF00555">
    <property type="entry name" value="Endotoxin_M"/>
    <property type="match status" value="1"/>
</dbReference>
<dbReference type="Pfam" id="PF03945">
    <property type="entry name" value="Endotoxin_N"/>
    <property type="match status" value="1"/>
</dbReference>
<dbReference type="SUPFAM" id="SSF51096">
    <property type="entry name" value="delta-Endotoxin (insectocide), middle domain"/>
    <property type="match status" value="1"/>
</dbReference>
<dbReference type="SUPFAM" id="SSF56849">
    <property type="entry name" value="delta-Endotoxin (insectocide), N-terminal domain"/>
    <property type="match status" value="1"/>
</dbReference>
<dbReference type="SUPFAM" id="SSF49785">
    <property type="entry name" value="Galactose-binding domain-like"/>
    <property type="match status" value="2"/>
</dbReference>
<accession>P19415</accession>
<keyword id="KW-0002">3D-structure</keyword>
<keyword id="KW-0749">Sporulation</keyword>
<keyword id="KW-0800">Toxin</keyword>
<keyword id="KW-0843">Virulence</keyword>
<protein>
    <recommendedName>
        <fullName>Pesticidal crystal protein Cry1Da</fullName>
    </recommendedName>
    <alternativeName>
        <fullName>132 kDa crystal protein</fullName>
    </alternativeName>
    <alternativeName>
        <fullName>Crystaline entomocidal protoxin</fullName>
    </alternativeName>
    <alternativeName>
        <fullName>Insecticidal delta-endotoxin CryID(a)</fullName>
    </alternativeName>
</protein>
<feature type="chain" id="PRO_0000174038" description="Pesticidal crystal protein Cry1Da">
    <location>
        <begin position="1"/>
        <end position="1165"/>
    </location>
</feature>
<feature type="helix" evidence="2">
    <location>
        <begin position="33"/>
        <end position="47"/>
    </location>
</feature>
<feature type="strand" evidence="2">
    <location>
        <begin position="50"/>
        <end position="52"/>
    </location>
</feature>
<feature type="helix" evidence="2">
    <location>
        <begin position="53"/>
        <end position="62"/>
    </location>
</feature>
<feature type="turn" evidence="2">
    <location>
        <begin position="63"/>
        <end position="66"/>
    </location>
</feature>
<feature type="helix" evidence="2">
    <location>
        <begin position="69"/>
        <end position="83"/>
    </location>
</feature>
<feature type="helix" evidence="2">
    <location>
        <begin position="89"/>
        <end position="118"/>
    </location>
</feature>
<feature type="helix" evidence="2">
    <location>
        <begin position="123"/>
        <end position="143"/>
    </location>
</feature>
<feature type="helix" evidence="2">
    <location>
        <begin position="144"/>
        <end position="147"/>
    </location>
</feature>
<feature type="turn" evidence="2">
    <location>
        <begin position="153"/>
        <end position="156"/>
    </location>
</feature>
<feature type="helix" evidence="2">
    <location>
        <begin position="157"/>
        <end position="181"/>
    </location>
</feature>
<feature type="helix" evidence="2">
    <location>
        <begin position="185"/>
        <end position="216"/>
    </location>
</feature>
<feature type="helix" evidence="2">
    <location>
        <begin position="222"/>
        <end position="238"/>
    </location>
</feature>
<feature type="helix" evidence="2">
    <location>
        <begin position="240"/>
        <end position="243"/>
    </location>
</feature>
<feature type="helix" evidence="2">
    <location>
        <begin position="244"/>
        <end position="249"/>
    </location>
</feature>
<feature type="turn" evidence="2">
    <location>
        <begin position="251"/>
        <end position="253"/>
    </location>
</feature>
<feature type="strand" evidence="2">
    <location>
        <begin position="265"/>
        <end position="267"/>
    </location>
</feature>
<feature type="helix" evidence="2">
    <location>
        <begin position="280"/>
        <end position="282"/>
    </location>
</feature>
<feature type="helix" evidence="2">
    <location>
        <begin position="286"/>
        <end position="293"/>
    </location>
</feature>
<feature type="strand" evidence="2">
    <location>
        <begin position="301"/>
        <end position="313"/>
    </location>
</feature>
<feature type="strand" evidence="2">
    <location>
        <begin position="316"/>
        <end position="328"/>
    </location>
</feature>
<feature type="strand" evidence="2">
    <location>
        <begin position="331"/>
        <end position="337"/>
    </location>
</feature>
<feature type="strand" evidence="2">
    <location>
        <begin position="347"/>
        <end position="354"/>
    </location>
</feature>
<feature type="strand" evidence="2">
    <location>
        <begin position="357"/>
        <end position="359"/>
    </location>
</feature>
<feature type="strand" evidence="2">
    <location>
        <begin position="361"/>
        <end position="368"/>
    </location>
</feature>
<feature type="helix" evidence="2">
    <location>
        <begin position="369"/>
        <end position="371"/>
    </location>
</feature>
<feature type="strand" evidence="2">
    <location>
        <begin position="376"/>
        <end position="389"/>
    </location>
</feature>
<feature type="strand" evidence="2">
    <location>
        <begin position="391"/>
        <end position="395"/>
    </location>
</feature>
<feature type="strand" evidence="2">
    <location>
        <begin position="399"/>
        <end position="401"/>
    </location>
</feature>
<feature type="helix" evidence="2">
    <location>
        <begin position="402"/>
        <end position="405"/>
    </location>
</feature>
<feature type="helix" evidence="2">
    <location>
        <begin position="415"/>
        <end position="418"/>
    </location>
</feature>
<feature type="strand" evidence="2">
    <location>
        <begin position="421"/>
        <end position="431"/>
    </location>
</feature>
<feature type="strand" evidence="2">
    <location>
        <begin position="433"/>
        <end position="446"/>
    </location>
</feature>
<feature type="strand" evidence="2">
    <location>
        <begin position="459"/>
        <end position="464"/>
    </location>
</feature>
<feature type="helix" evidence="2">
    <location>
        <begin position="465"/>
        <end position="467"/>
    </location>
</feature>
<feature type="strand" evidence="2">
    <location>
        <begin position="475"/>
        <end position="478"/>
    </location>
</feature>
<feature type="strand" evidence="2">
    <location>
        <begin position="482"/>
        <end position="486"/>
    </location>
</feature>
<feature type="strand" evidence="2">
    <location>
        <begin position="488"/>
        <end position="496"/>
    </location>
</feature>
<feature type="strand" evidence="2">
    <location>
        <begin position="500"/>
        <end position="504"/>
    </location>
</feature>
<feature type="strand" evidence="2">
    <location>
        <begin position="506"/>
        <end position="508"/>
    </location>
</feature>
<feature type="strand" evidence="2">
    <location>
        <begin position="510"/>
        <end position="529"/>
    </location>
</feature>
<feature type="strand" evidence="2">
    <location>
        <begin position="531"/>
        <end position="533"/>
    </location>
</feature>
<feature type="strand" evidence="2">
    <location>
        <begin position="536"/>
        <end position="540"/>
    </location>
</feature>
<feature type="helix" evidence="2">
    <location>
        <begin position="552"/>
        <end position="554"/>
    </location>
</feature>
<feature type="strand" evidence="2">
    <location>
        <begin position="556"/>
        <end position="566"/>
    </location>
</feature>
<feature type="strand" evidence="2">
    <location>
        <begin position="568"/>
        <end position="577"/>
    </location>
</feature>
<feature type="strand" evidence="2">
    <location>
        <begin position="581"/>
        <end position="591"/>
    </location>
</feature>
<sequence>MEINNQNQCVPYNCLSNPKEIILGEERLETGNTVADISLGLINFLYSNFVPGGGFIVGLLELIWGFIGPSQWDIFLAQIEQLISQRIEEFARNQAISRLEGLSNLYKVYVRAFSDWEKDPTNPALREEMRIQFNDMNSALITAIPLFRVQNYEVALLSVYVQAANLHLSILRDVSVFGERWGYDTATINNRYSDLTSLIHVYTNHCVDTYNQGLRRLEGRFLSDWIVYNRFRRQLTISVLDIVAFFPNYDIRTYPIQTATQLTREVYLDLPFINENLSPAASYPTFSAAESAIIRSPHLVDFLNSFTIYTDSLARYAYWGGHLVNSFRTGTTTNLIRSPLYGREGNTERPVTITASPSVPIFRTLSYITGLDNSNPVAGIEGVEFQNTISRSIYRKSGPIDSFSELPPQDASVSPAIGYSHRLCHATFLERISGPRIAGTVFSWTHRSASPTNEVSPSRITQIPWVKAHTLASGASVIKGPGFTGGDILTRNSMGELGTLRVTFTGRLPQSYYIRFRYASVANRSGTFRYSQPPSYGISFPKTMDAGEPLTSRSFAHTTLFTPITFSRAQEEFDLYIQSGVYIDRIEFIPVTATFEAEYDLERAQKVVNALFTSTNQLGLKTDVTDYHIDQVSNLVACLSDEFCLDEKRELSEKVKHAKRLSDERNLLQDPNFRGINRQPDRGWRGSTDITIQGGDDVFKENYVTLPGTFDECYPTYLYQKIDESKLKAYTRYQLRGYIEDSQDLEIYLIRYNAKHEIVNVPGTGSLWPLSVENQIGPCGEPNRCAPHLEWNPDLHCSCRDGEKCAHHSHHFSLDIDVGCTDLNEDLGVWVIFKIKTQDGHARLGNLEFLEEKPLLGEALARVKRAEKKWRDKRETLQLETTIVYKEAKESVDALFVNSQYDRLQADTNIAMIHAADKRVHRIREAYLPELSVIPGVNAAIFEELEERIFTAFSLYDARNIIKNGDFNNGLLCWNVKGHVEVEEQNNHRSVLVIPEWEAEVSQEVRVCPGRGYILRVTAYKEGYGEGCVTIHEIENNTDELKFNNCVEEEVYPNNTVTCINYTATQEEYEGTYTSRNRGYDEAYGNNPSVPADYASVYEEKSYTDRRRENPCESNRGYGDYTPLPAGYVTKELEYFPETDKVWIEIGETEGTFIVDSVELLLMEE</sequence>